<name>GUAA_TREDE</name>
<dbReference type="EC" id="6.3.5.2" evidence="1"/>
<dbReference type="EMBL" id="AE017226">
    <property type="protein sequence ID" value="AAS12233.1"/>
    <property type="molecule type" value="Genomic_DNA"/>
</dbReference>
<dbReference type="RefSeq" id="NP_972322.1">
    <property type="nucleotide sequence ID" value="NC_002967.9"/>
</dbReference>
<dbReference type="SMR" id="Q73LZ4"/>
<dbReference type="STRING" id="243275.TDE_1718"/>
<dbReference type="MEROPS" id="C26.957"/>
<dbReference type="PaxDb" id="243275-TDE_1718"/>
<dbReference type="KEGG" id="tde:TDE_1718"/>
<dbReference type="PATRIC" id="fig|243275.7.peg.1643"/>
<dbReference type="eggNOG" id="COG0519">
    <property type="taxonomic scope" value="Bacteria"/>
</dbReference>
<dbReference type="HOGENOM" id="CLU_014340_0_5_12"/>
<dbReference type="OrthoDB" id="9802219at2"/>
<dbReference type="UniPathway" id="UPA00189">
    <property type="reaction ID" value="UER00296"/>
</dbReference>
<dbReference type="Proteomes" id="UP000008212">
    <property type="component" value="Chromosome"/>
</dbReference>
<dbReference type="GO" id="GO:0005829">
    <property type="term" value="C:cytosol"/>
    <property type="evidence" value="ECO:0007669"/>
    <property type="project" value="TreeGrafter"/>
</dbReference>
<dbReference type="GO" id="GO:0004066">
    <property type="term" value="F:asparagine synthase (glutamine-hydrolyzing) activity"/>
    <property type="evidence" value="ECO:0007669"/>
    <property type="project" value="InterPro"/>
</dbReference>
<dbReference type="GO" id="GO:0005524">
    <property type="term" value="F:ATP binding"/>
    <property type="evidence" value="ECO:0007669"/>
    <property type="project" value="UniProtKB-UniRule"/>
</dbReference>
<dbReference type="GO" id="GO:0003921">
    <property type="term" value="F:GMP synthase activity"/>
    <property type="evidence" value="ECO:0007669"/>
    <property type="project" value="InterPro"/>
</dbReference>
<dbReference type="GO" id="GO:0006529">
    <property type="term" value="P:asparagine biosynthetic process"/>
    <property type="evidence" value="ECO:0007669"/>
    <property type="project" value="InterPro"/>
</dbReference>
<dbReference type="CDD" id="cd01742">
    <property type="entry name" value="GATase1_GMP_Synthase"/>
    <property type="match status" value="1"/>
</dbReference>
<dbReference type="CDD" id="cd01997">
    <property type="entry name" value="GMP_synthase_C"/>
    <property type="match status" value="1"/>
</dbReference>
<dbReference type="FunFam" id="3.30.300.10:FF:000002">
    <property type="entry name" value="GMP synthase [glutamine-hydrolyzing]"/>
    <property type="match status" value="1"/>
</dbReference>
<dbReference type="FunFam" id="3.40.50.620:FF:000001">
    <property type="entry name" value="GMP synthase [glutamine-hydrolyzing]"/>
    <property type="match status" value="1"/>
</dbReference>
<dbReference type="FunFam" id="3.40.50.880:FF:000001">
    <property type="entry name" value="GMP synthase [glutamine-hydrolyzing]"/>
    <property type="match status" value="1"/>
</dbReference>
<dbReference type="Gene3D" id="3.30.300.10">
    <property type="match status" value="1"/>
</dbReference>
<dbReference type="Gene3D" id="3.40.50.880">
    <property type="match status" value="1"/>
</dbReference>
<dbReference type="Gene3D" id="3.40.50.620">
    <property type="entry name" value="HUPs"/>
    <property type="match status" value="1"/>
</dbReference>
<dbReference type="HAMAP" id="MF_00344">
    <property type="entry name" value="GMP_synthase"/>
    <property type="match status" value="1"/>
</dbReference>
<dbReference type="InterPro" id="IPR001962">
    <property type="entry name" value="Asn_synthase"/>
</dbReference>
<dbReference type="InterPro" id="IPR029062">
    <property type="entry name" value="Class_I_gatase-like"/>
</dbReference>
<dbReference type="InterPro" id="IPR017926">
    <property type="entry name" value="GATASE"/>
</dbReference>
<dbReference type="InterPro" id="IPR001674">
    <property type="entry name" value="GMP_synth_C"/>
</dbReference>
<dbReference type="InterPro" id="IPR004739">
    <property type="entry name" value="GMP_synth_GATase"/>
</dbReference>
<dbReference type="InterPro" id="IPR022955">
    <property type="entry name" value="GMP_synthase"/>
</dbReference>
<dbReference type="InterPro" id="IPR025777">
    <property type="entry name" value="GMPS_ATP_PPase_dom"/>
</dbReference>
<dbReference type="InterPro" id="IPR014729">
    <property type="entry name" value="Rossmann-like_a/b/a_fold"/>
</dbReference>
<dbReference type="NCBIfam" id="TIGR00884">
    <property type="entry name" value="guaA_Cterm"/>
    <property type="match status" value="1"/>
</dbReference>
<dbReference type="NCBIfam" id="TIGR00888">
    <property type="entry name" value="guaA_Nterm"/>
    <property type="match status" value="1"/>
</dbReference>
<dbReference type="NCBIfam" id="NF000848">
    <property type="entry name" value="PRK00074.1"/>
    <property type="match status" value="1"/>
</dbReference>
<dbReference type="PANTHER" id="PTHR11922:SF2">
    <property type="entry name" value="GMP SYNTHASE [GLUTAMINE-HYDROLYZING]"/>
    <property type="match status" value="1"/>
</dbReference>
<dbReference type="PANTHER" id="PTHR11922">
    <property type="entry name" value="GMP SYNTHASE-RELATED"/>
    <property type="match status" value="1"/>
</dbReference>
<dbReference type="Pfam" id="PF00733">
    <property type="entry name" value="Asn_synthase"/>
    <property type="match status" value="1"/>
</dbReference>
<dbReference type="Pfam" id="PF00117">
    <property type="entry name" value="GATase"/>
    <property type="match status" value="1"/>
</dbReference>
<dbReference type="Pfam" id="PF00958">
    <property type="entry name" value="GMP_synt_C"/>
    <property type="match status" value="1"/>
</dbReference>
<dbReference type="PRINTS" id="PR00099">
    <property type="entry name" value="CPSGATASE"/>
</dbReference>
<dbReference type="PRINTS" id="PR00096">
    <property type="entry name" value="GATASE"/>
</dbReference>
<dbReference type="SUPFAM" id="SSF52402">
    <property type="entry name" value="Adenine nucleotide alpha hydrolases-like"/>
    <property type="match status" value="1"/>
</dbReference>
<dbReference type="SUPFAM" id="SSF52317">
    <property type="entry name" value="Class I glutamine amidotransferase-like"/>
    <property type="match status" value="1"/>
</dbReference>
<dbReference type="SUPFAM" id="SSF54810">
    <property type="entry name" value="GMP synthetase C-terminal dimerisation domain"/>
    <property type="match status" value="1"/>
</dbReference>
<dbReference type="PROSITE" id="PS51273">
    <property type="entry name" value="GATASE_TYPE_1"/>
    <property type="match status" value="1"/>
</dbReference>
<dbReference type="PROSITE" id="PS51553">
    <property type="entry name" value="GMPS_ATP_PPASE"/>
    <property type="match status" value="1"/>
</dbReference>
<keyword id="KW-0067">ATP-binding</keyword>
<keyword id="KW-0315">Glutamine amidotransferase</keyword>
<keyword id="KW-0332">GMP biosynthesis</keyword>
<keyword id="KW-0436">Ligase</keyword>
<keyword id="KW-0547">Nucleotide-binding</keyword>
<keyword id="KW-0658">Purine biosynthesis</keyword>
<keyword id="KW-1185">Reference proteome</keyword>
<reference key="1">
    <citation type="journal article" date="2004" name="Proc. Natl. Acad. Sci. U.S.A.">
        <title>Comparison of the genome of the oral pathogen Treponema denticola with other spirochete genomes.</title>
        <authorList>
            <person name="Seshadri R."/>
            <person name="Myers G.S.A."/>
            <person name="Tettelin H."/>
            <person name="Eisen J.A."/>
            <person name="Heidelberg J.F."/>
            <person name="Dodson R.J."/>
            <person name="Davidsen T.M."/>
            <person name="DeBoy R.T."/>
            <person name="Fouts D.E."/>
            <person name="Haft D.H."/>
            <person name="Selengut J."/>
            <person name="Ren Q."/>
            <person name="Brinkac L.M."/>
            <person name="Madupu R."/>
            <person name="Kolonay J.F."/>
            <person name="Durkin S.A."/>
            <person name="Daugherty S.C."/>
            <person name="Shetty J."/>
            <person name="Shvartsbeyn A."/>
            <person name="Gebregeorgis E."/>
            <person name="Geer K."/>
            <person name="Tsegaye G."/>
            <person name="Malek J.A."/>
            <person name="Ayodeji B."/>
            <person name="Shatsman S."/>
            <person name="McLeod M.P."/>
            <person name="Smajs D."/>
            <person name="Howell J.K."/>
            <person name="Pal S."/>
            <person name="Amin A."/>
            <person name="Vashisth P."/>
            <person name="McNeill T.Z."/>
            <person name="Xiang Q."/>
            <person name="Sodergren E."/>
            <person name="Baca E."/>
            <person name="Weinstock G.M."/>
            <person name="Norris S.J."/>
            <person name="Fraser C.M."/>
            <person name="Paulsen I.T."/>
        </authorList>
    </citation>
    <scope>NUCLEOTIDE SEQUENCE [LARGE SCALE GENOMIC DNA]</scope>
    <source>
        <strain>ATCC 35405 / DSM 14222 / CIP 103919 / JCM 8153 / KCTC 15104</strain>
    </source>
</reference>
<evidence type="ECO:0000255" key="1">
    <source>
        <dbReference type="HAMAP-Rule" id="MF_00344"/>
    </source>
</evidence>
<comment type="function">
    <text evidence="1">Catalyzes the synthesis of GMP from XMP.</text>
</comment>
<comment type="catalytic activity">
    <reaction evidence="1">
        <text>XMP + L-glutamine + ATP + H2O = GMP + L-glutamate + AMP + diphosphate + 2 H(+)</text>
        <dbReference type="Rhea" id="RHEA:11680"/>
        <dbReference type="ChEBI" id="CHEBI:15377"/>
        <dbReference type="ChEBI" id="CHEBI:15378"/>
        <dbReference type="ChEBI" id="CHEBI:29985"/>
        <dbReference type="ChEBI" id="CHEBI:30616"/>
        <dbReference type="ChEBI" id="CHEBI:33019"/>
        <dbReference type="ChEBI" id="CHEBI:57464"/>
        <dbReference type="ChEBI" id="CHEBI:58115"/>
        <dbReference type="ChEBI" id="CHEBI:58359"/>
        <dbReference type="ChEBI" id="CHEBI:456215"/>
        <dbReference type="EC" id="6.3.5.2"/>
    </reaction>
</comment>
<comment type="pathway">
    <text evidence="1">Purine metabolism; GMP biosynthesis; GMP from XMP (L-Gln route): step 1/1.</text>
</comment>
<comment type="subunit">
    <text evidence="1">Homodimer.</text>
</comment>
<sequence>MKKKPLSAKIVFMKITEKILIVDFGGQYNQLIARRVRDLNVYSDIVPASKALDYIRENKPIGIIFTGGPNSVYEEKAPLPPKEIFNLNIPILGICYGMQAMAHCLGGKVEKSLKREFGKTLTKFDTGIPLFKNIKDKSSVWMSHVDCVSRLPEGFVSAAQTANTKNAAMANKEKKLYGIQFHAEVEHSEEGQNIIKNFLYNVCGAKGDWNMKSFLAEAIKDVQNTVKDGKVLLALSGGVDSSVLAALLNRAVGKNLTCIFVDHGLMRKNEGDEVEAAFRDTPMNFIRVNAESRFLGKLKGVSDPEKKRKIIGEEFIRVFEEEAEKIGTVDFLAQGTIYADVVESGTKGSAVIKSHHNVGGLPDHISFKSLIEPLKTLFKDEIRNLGTELGLPDYLVHRQPFPGPGLAIRIMGEITEEKLDILREADAIWRSELEHADIKKDLSQYFAVLTSTKTVGVMGDFRTYDYTLALRAVKTSDFMSADWVRIPYEVLDKVSSRIINEVKGINRIVYDITSKPPATIEWE</sequence>
<organism>
    <name type="scientific">Treponema denticola (strain ATCC 35405 / DSM 14222 / CIP 103919 / JCM 8153 / KCTC 15104)</name>
    <dbReference type="NCBI Taxonomy" id="243275"/>
    <lineage>
        <taxon>Bacteria</taxon>
        <taxon>Pseudomonadati</taxon>
        <taxon>Spirochaetota</taxon>
        <taxon>Spirochaetia</taxon>
        <taxon>Spirochaetales</taxon>
        <taxon>Treponemataceae</taxon>
        <taxon>Treponema</taxon>
    </lineage>
</organism>
<protein>
    <recommendedName>
        <fullName evidence="1">GMP synthase [glutamine-hydrolyzing]</fullName>
        <ecNumber evidence="1">6.3.5.2</ecNumber>
    </recommendedName>
    <alternativeName>
        <fullName evidence="1">GMP synthetase</fullName>
    </alternativeName>
    <alternativeName>
        <fullName evidence="1">Glutamine amidotransferase</fullName>
    </alternativeName>
</protein>
<proteinExistence type="inferred from homology"/>
<feature type="chain" id="PRO_0000140200" description="GMP synthase [glutamine-hydrolyzing]">
    <location>
        <begin position="1"/>
        <end position="523"/>
    </location>
</feature>
<feature type="domain" description="Glutamine amidotransferase type-1" evidence="1">
    <location>
        <begin position="18"/>
        <end position="208"/>
    </location>
</feature>
<feature type="domain" description="GMPS ATP-PPase" evidence="1">
    <location>
        <begin position="209"/>
        <end position="398"/>
    </location>
</feature>
<feature type="active site" description="Nucleophile" evidence="1">
    <location>
        <position position="95"/>
    </location>
</feature>
<feature type="active site" evidence="1">
    <location>
        <position position="182"/>
    </location>
</feature>
<feature type="active site" evidence="1">
    <location>
        <position position="184"/>
    </location>
</feature>
<feature type="binding site" evidence="1">
    <location>
        <begin position="236"/>
        <end position="242"/>
    </location>
    <ligand>
        <name>ATP</name>
        <dbReference type="ChEBI" id="CHEBI:30616"/>
    </ligand>
</feature>
<gene>
    <name evidence="1" type="primary">guaA</name>
    <name type="ordered locus">TDE_1718</name>
</gene>
<accession>Q73LZ4</accession>